<gene>
    <name evidence="1" type="primary">hflD</name>
    <name type="ordered locus">Spea_2539</name>
</gene>
<sequence length="205" mass="22982">MSDQLFERTMAFAGILQAVAQVQYIARHGDSDKEALAASLQSVLVTNPESTSDVYADKFALRKGYELIVSQLGDAKQKDVEVTRYLVGILALERKLTRSSNAMGMLSERINQIHRQLSHFEITDEQVIANFAGIYSDIISELGPKLQISGNPEFLKRTQTQQKIRALLLSAMRSAVLWRQLGGKRRHLVFSRKTIVDTAMKSLTL</sequence>
<feature type="chain" id="PRO_1000083182" description="High frequency lysogenization protein HflD homolog">
    <location>
        <begin position="1"/>
        <end position="205"/>
    </location>
</feature>
<comment type="subcellular location">
    <subcellularLocation>
        <location>Cytoplasm</location>
    </subcellularLocation>
    <subcellularLocation>
        <location evidence="1">Cell inner membrane</location>
        <topology evidence="1">Peripheral membrane protein</topology>
        <orientation evidence="1">Cytoplasmic side</orientation>
    </subcellularLocation>
</comment>
<comment type="similarity">
    <text evidence="1">Belongs to the HflD family.</text>
</comment>
<dbReference type="EMBL" id="CP000851">
    <property type="protein sequence ID" value="ABV87859.1"/>
    <property type="molecule type" value="Genomic_DNA"/>
</dbReference>
<dbReference type="RefSeq" id="WP_012155766.1">
    <property type="nucleotide sequence ID" value="NC_009901.1"/>
</dbReference>
<dbReference type="SMR" id="A8H5M2"/>
<dbReference type="STRING" id="398579.Spea_2539"/>
<dbReference type="KEGG" id="spl:Spea_2539"/>
<dbReference type="eggNOG" id="COG2915">
    <property type="taxonomic scope" value="Bacteria"/>
</dbReference>
<dbReference type="HOGENOM" id="CLU_098920_0_0_6"/>
<dbReference type="OrthoDB" id="9788031at2"/>
<dbReference type="Proteomes" id="UP000002608">
    <property type="component" value="Chromosome"/>
</dbReference>
<dbReference type="GO" id="GO:0005737">
    <property type="term" value="C:cytoplasm"/>
    <property type="evidence" value="ECO:0007669"/>
    <property type="project" value="UniProtKB-SubCell"/>
</dbReference>
<dbReference type="GO" id="GO:0005886">
    <property type="term" value="C:plasma membrane"/>
    <property type="evidence" value="ECO:0007669"/>
    <property type="project" value="UniProtKB-SubCell"/>
</dbReference>
<dbReference type="Gene3D" id="1.10.3890.10">
    <property type="entry name" value="HflD-like"/>
    <property type="match status" value="1"/>
</dbReference>
<dbReference type="HAMAP" id="MF_00695">
    <property type="entry name" value="HflD_protein"/>
    <property type="match status" value="1"/>
</dbReference>
<dbReference type="InterPro" id="IPR007451">
    <property type="entry name" value="HflD"/>
</dbReference>
<dbReference type="InterPro" id="IPR035932">
    <property type="entry name" value="HflD-like_sf"/>
</dbReference>
<dbReference type="NCBIfam" id="NF001246">
    <property type="entry name" value="PRK00218.1-2"/>
    <property type="match status" value="1"/>
</dbReference>
<dbReference type="NCBIfam" id="NF001248">
    <property type="entry name" value="PRK00218.1-4"/>
    <property type="match status" value="1"/>
</dbReference>
<dbReference type="PANTHER" id="PTHR38100">
    <property type="entry name" value="HIGH FREQUENCY LYSOGENIZATION PROTEIN HFLD"/>
    <property type="match status" value="1"/>
</dbReference>
<dbReference type="PANTHER" id="PTHR38100:SF1">
    <property type="entry name" value="HIGH FREQUENCY LYSOGENIZATION PROTEIN HFLD"/>
    <property type="match status" value="1"/>
</dbReference>
<dbReference type="Pfam" id="PF04356">
    <property type="entry name" value="DUF489"/>
    <property type="match status" value="1"/>
</dbReference>
<dbReference type="SUPFAM" id="SSF101322">
    <property type="entry name" value="YcfC-like"/>
    <property type="match status" value="1"/>
</dbReference>
<keyword id="KW-0997">Cell inner membrane</keyword>
<keyword id="KW-1003">Cell membrane</keyword>
<keyword id="KW-0963">Cytoplasm</keyword>
<keyword id="KW-0472">Membrane</keyword>
<keyword id="KW-1185">Reference proteome</keyword>
<accession>A8H5M2</accession>
<protein>
    <recommendedName>
        <fullName evidence="1">High frequency lysogenization protein HflD homolog</fullName>
    </recommendedName>
</protein>
<organism>
    <name type="scientific">Shewanella pealeana (strain ATCC 700345 / ANG-SQ1)</name>
    <dbReference type="NCBI Taxonomy" id="398579"/>
    <lineage>
        <taxon>Bacteria</taxon>
        <taxon>Pseudomonadati</taxon>
        <taxon>Pseudomonadota</taxon>
        <taxon>Gammaproteobacteria</taxon>
        <taxon>Alteromonadales</taxon>
        <taxon>Shewanellaceae</taxon>
        <taxon>Shewanella</taxon>
    </lineage>
</organism>
<evidence type="ECO:0000255" key="1">
    <source>
        <dbReference type="HAMAP-Rule" id="MF_00695"/>
    </source>
</evidence>
<name>HFLD_SHEPA</name>
<proteinExistence type="inferred from homology"/>
<reference key="1">
    <citation type="submission" date="2007-10" db="EMBL/GenBank/DDBJ databases">
        <title>Complete sequence of Shewanella pealeana ATCC 700345.</title>
        <authorList>
            <consortium name="US DOE Joint Genome Institute"/>
            <person name="Copeland A."/>
            <person name="Lucas S."/>
            <person name="Lapidus A."/>
            <person name="Barry K."/>
            <person name="Glavina del Rio T."/>
            <person name="Dalin E."/>
            <person name="Tice H."/>
            <person name="Pitluck S."/>
            <person name="Chertkov O."/>
            <person name="Brettin T."/>
            <person name="Bruce D."/>
            <person name="Detter J.C."/>
            <person name="Han C."/>
            <person name="Schmutz J."/>
            <person name="Larimer F."/>
            <person name="Land M."/>
            <person name="Hauser L."/>
            <person name="Kyrpides N."/>
            <person name="Kim E."/>
            <person name="Zhao J.-S.Z."/>
            <person name="Manno D."/>
            <person name="Hawari J."/>
            <person name="Richardson P."/>
        </authorList>
    </citation>
    <scope>NUCLEOTIDE SEQUENCE [LARGE SCALE GENOMIC DNA]</scope>
    <source>
        <strain>ATCC 700345 / ANG-SQ1</strain>
    </source>
</reference>